<sequence>AEQQNFLSDLTGSFSSPCNENPTVAMMXISYXXQXIWAS</sequence>
<reference key="1">
    <citation type="journal article" date="1988" name="Biochem. J.">
        <title>Purification and characterization of 5-ketofructose reductase from Erwinia citreus.</title>
        <authorList>
            <person name="Schrimsher J.L."/>
            <person name="Wingfield P.T."/>
            <person name="Bernard A."/>
            <person name="Mattaliano R."/>
            <person name="Payton M.A."/>
        </authorList>
    </citation>
    <scope>PROTEIN SEQUENCE</scope>
</reference>
<keyword id="KW-0903">Direct protein sequencing</keyword>
<keyword id="KW-0521">NADP</keyword>
<keyword id="KW-0560">Oxidoreductase</keyword>
<protein>
    <recommendedName>
        <fullName>Fructose 5-dehydrogenase [NADP(+)]</fullName>
        <ecNumber>1.1.1.124</ecNumber>
    </recommendedName>
    <alternativeName>
        <fullName>5-ketofructose reductase [NADP(+)]</fullName>
    </alternativeName>
</protein>
<organism>
    <name type="scientific">Erwinia citreus</name>
    <dbReference type="NCBI Taxonomy" id="558"/>
    <lineage>
        <taxon>Bacteria</taxon>
        <taxon>Pseudomonadati</taxon>
        <taxon>Pseudomonadota</taxon>
        <taxon>Gammaproteobacteria</taxon>
        <taxon>Enterobacterales</taxon>
        <taxon>Erwiniaceae</taxon>
        <taxon>Erwinia</taxon>
    </lineage>
</organism>
<proteinExistence type="evidence at protein level"/>
<accession>P19574</accession>
<comment type="catalytic activity">
    <reaction>
        <text>D-fructose + NADP(+) = 5-dehydro-D-fructose + NADPH + H(+)</text>
        <dbReference type="Rhea" id="RHEA:14069"/>
        <dbReference type="ChEBI" id="CHEBI:15378"/>
        <dbReference type="ChEBI" id="CHEBI:17011"/>
        <dbReference type="ChEBI" id="CHEBI:37721"/>
        <dbReference type="ChEBI" id="CHEBI:57783"/>
        <dbReference type="ChEBI" id="CHEBI:58349"/>
        <dbReference type="EC" id="1.1.1.124"/>
    </reaction>
</comment>
<dbReference type="EC" id="1.1.1.124"/>
<dbReference type="PIR" id="S01003">
    <property type="entry name" value="S01003"/>
</dbReference>
<dbReference type="GO" id="GO:0047903">
    <property type="term" value="F:fructose 5-dehydrogenase (NADP+) activity"/>
    <property type="evidence" value="ECO:0007669"/>
    <property type="project" value="UniProtKB-EC"/>
</dbReference>
<feature type="chain" id="PRO_0000079888" description="Fructose 5-dehydrogenase [NADP(+)]">
    <location>
        <begin position="1"/>
        <end position="39" status="greater than"/>
    </location>
</feature>
<feature type="non-terminal residue">
    <location>
        <position position="39"/>
    </location>
</feature>
<name>DHF5_ERWCI</name>